<sequence>MNDSPIISVVLPFLIKDNDDKSLNYQGINNLIISIDSIIEQTFKEWELILVDDGSNNEILEQLLSKRYSTDNRIKFIINKENKGIVKSLNDAILNHCSPTSKYIARMDSDDISHPTRLQSQLKYLQSNETIDILGCPIKMFNNNKLIEILNNNNNNNNINNNVKELINIINNEESFKFIQHPDKDILMWSMFFNCCIVHPSVIFKRSIFTIEHCYEENNQFPFIEDYLFWLKSLIMKGLNISNIQSSTPLLYLRKHNNSISFKNIEKQKDSTANASCYYLNILFKRFNIDSEIIQNSSLSMKEIIQFFQLSPSSLSKINNISIELFEFAFKYLELIEKSCTKQQPNYSNSIKDAANEKMGELVSLCLSNYPNNQKSSLLWEKWLSRNPTSQLLSLLSNLNVKSSTTIINNNINNNNNNNNNNNNNNNNNNNNNNNNNNNNNSILNFISGINSNKINTPKSNNNKFKENGIRIICFSKDRAFQLKEYLRTFFKYLKNDDNGNDKFEIIVDVLFTYSNEKFKNSYQLVIESFPQVNFIKEENFTDQLINLVQKTNKLEYVMFSVDDILYYNEFNLKEYCLSLNSEPLALGFYMKLNKNITYCHTCNQDITIPLNSNTISRTENNFKYLKWNRNDNDCKKDWNYPWDLCSTIYRCNDIDSIINGIVKYYGIRNGINHPNRFEFNGNRPIIQKQIYQNKPYCLCLSDHYSPMSVVTINRVQDVYDNPIYDQTLSLDDLDQLLYSNKSLNDEKYKENSLSLNFKSVHIGELFIS</sequence>
<accession>Q54QG0</accession>
<accession>Q9NAX6</accession>
<reference key="1">
    <citation type="journal article" date="2001" name="J. Biol. Chem.">
        <title>A non-Golgi alpha 1,2-fucosyltransferase that modifies Skp1 in the cytoplasm of Dictyostelium.</title>
        <authorList>
            <person name="van Der Wel H."/>
            <person name="Morris H.R."/>
            <person name="Panico M."/>
            <person name="Paxton T."/>
            <person name="North S.J."/>
            <person name="Dell A."/>
            <person name="Thomson J.M."/>
            <person name="West C.M."/>
        </authorList>
    </citation>
    <scope>NUCLEOTIDE SEQUENCE [GENOMIC DNA]</scope>
    <scope>CATALYTIC ACTIVITY</scope>
    <scope>PROTEIN SEQUENCE OF 146-184; 238-263; 288-302 AND 343-352</scope>
    <scope>IDENTIFICATION BY MASS SPECTROMETRY</scope>
</reference>
<reference key="2">
    <citation type="journal article" date="2005" name="Nature">
        <title>The genome of the social amoeba Dictyostelium discoideum.</title>
        <authorList>
            <person name="Eichinger L."/>
            <person name="Pachebat J.A."/>
            <person name="Gloeckner G."/>
            <person name="Rajandream M.A."/>
            <person name="Sucgang R."/>
            <person name="Berriman M."/>
            <person name="Song J."/>
            <person name="Olsen R."/>
            <person name="Szafranski K."/>
            <person name="Xu Q."/>
            <person name="Tunggal B."/>
            <person name="Kummerfeld S."/>
            <person name="Madera M."/>
            <person name="Konfortov B.A."/>
            <person name="Rivero F."/>
            <person name="Bankier A.T."/>
            <person name="Lehmann R."/>
            <person name="Hamlin N."/>
            <person name="Davies R."/>
            <person name="Gaudet P."/>
            <person name="Fey P."/>
            <person name="Pilcher K."/>
            <person name="Chen G."/>
            <person name="Saunders D."/>
            <person name="Sodergren E.J."/>
            <person name="Davis P."/>
            <person name="Kerhornou A."/>
            <person name="Nie X."/>
            <person name="Hall N."/>
            <person name="Anjard C."/>
            <person name="Hemphill L."/>
            <person name="Bason N."/>
            <person name="Farbrother P."/>
            <person name="Desany B."/>
            <person name="Just E."/>
            <person name="Morio T."/>
            <person name="Rost R."/>
            <person name="Churcher C.M."/>
            <person name="Cooper J."/>
            <person name="Haydock S."/>
            <person name="van Driessche N."/>
            <person name="Cronin A."/>
            <person name="Goodhead I."/>
            <person name="Muzny D.M."/>
            <person name="Mourier T."/>
            <person name="Pain A."/>
            <person name="Lu M."/>
            <person name="Harper D."/>
            <person name="Lindsay R."/>
            <person name="Hauser H."/>
            <person name="James K.D."/>
            <person name="Quiles M."/>
            <person name="Madan Babu M."/>
            <person name="Saito T."/>
            <person name="Buchrieser C."/>
            <person name="Wardroper A."/>
            <person name="Felder M."/>
            <person name="Thangavelu M."/>
            <person name="Johnson D."/>
            <person name="Knights A."/>
            <person name="Loulseged H."/>
            <person name="Mungall K.L."/>
            <person name="Oliver K."/>
            <person name="Price C."/>
            <person name="Quail M.A."/>
            <person name="Urushihara H."/>
            <person name="Hernandez J."/>
            <person name="Rabbinowitsch E."/>
            <person name="Steffen D."/>
            <person name="Sanders M."/>
            <person name="Ma J."/>
            <person name="Kohara Y."/>
            <person name="Sharp S."/>
            <person name="Simmonds M.N."/>
            <person name="Spiegler S."/>
            <person name="Tivey A."/>
            <person name="Sugano S."/>
            <person name="White B."/>
            <person name="Walker D."/>
            <person name="Woodward J.R."/>
            <person name="Winckler T."/>
            <person name="Tanaka Y."/>
            <person name="Shaulsky G."/>
            <person name="Schleicher M."/>
            <person name="Weinstock G.M."/>
            <person name="Rosenthal A."/>
            <person name="Cox E.C."/>
            <person name="Chisholm R.L."/>
            <person name="Gibbs R.A."/>
            <person name="Loomis W.F."/>
            <person name="Platzer M."/>
            <person name="Kay R.R."/>
            <person name="Williams J.G."/>
            <person name="Dear P.H."/>
            <person name="Noegel A.A."/>
            <person name="Barrell B.G."/>
            <person name="Kuspa A."/>
        </authorList>
    </citation>
    <scope>NUCLEOTIDE SEQUENCE [LARGE SCALE GENOMIC DNA]</scope>
    <source>
        <strain>AX4</strain>
    </source>
</reference>
<reference key="3">
    <citation type="journal article" date="2002" name="J. Biol. Chem.">
        <title>A bifunctional diglycosyltransferase forms the Fucalpha1,2Galbeta1,3-disaccharide on Skp1 in the cytoplasm of dictyostelium.</title>
        <authorList>
            <person name="Van Der Wel H."/>
            <person name="Fisher S.Z."/>
            <person name="West C.M."/>
        </authorList>
    </citation>
    <scope>CATALYTIC ACTIVITY</scope>
    <scope>FUNCTION</scope>
    <scope>MUTAGENESIS OF ASP-53; ASP-226; ASP-497; ASP-509 AND ASP-654</scope>
</reference>
<name>PGFB_DICDI</name>
<comment type="function">
    <text evidence="3">Bifunctional protein composed of 2 glycosyltransferase domains involved in glycosylating skp1. The N-terminal part catalyzes the transfer of a galactose residue to GlcNAc-skp1 in a beta 1-3 linkage. The C-terminal part catalyzes the transfer of a fucose residue to Gal-GlcNAc-skp1 in an alpha 1-2 linkage.</text>
</comment>
<comment type="catalytic activity">
    <reaction evidence="3">
        <text>an N-acetyl-beta-D-glucosaminyl derivative + UDP-alpha-D-galactose = a beta-D-galactosyl-(1-&gt;3)-N-acetyl-beta-D-glucosaminyl derivative + UDP + H(+)</text>
        <dbReference type="Rhea" id="RHEA:53432"/>
        <dbReference type="ChEBI" id="CHEBI:15378"/>
        <dbReference type="ChEBI" id="CHEBI:58223"/>
        <dbReference type="ChEBI" id="CHEBI:61631"/>
        <dbReference type="ChEBI" id="CHEBI:66914"/>
        <dbReference type="ChEBI" id="CHEBI:133506"/>
    </reaction>
</comment>
<comment type="catalytic activity">
    <reaction evidence="2">
        <text>a beta-D-galactosyl-(1-&gt;3)-N-acetyl-beta-D-glucosaminyl derivative + GDP-beta-L-fucose = an alpha-L-Fuc-(1-&gt;2)-beta-D-Gal-(1-&gt;3)-beta-D-GlcNAc derivative + GDP + H(+)</text>
        <dbReference type="Rhea" id="RHEA:50664"/>
        <dbReference type="ChEBI" id="CHEBI:15378"/>
        <dbReference type="ChEBI" id="CHEBI:57273"/>
        <dbReference type="ChEBI" id="CHEBI:58189"/>
        <dbReference type="ChEBI" id="CHEBI:133506"/>
        <dbReference type="ChEBI" id="CHEBI:133509"/>
        <dbReference type="EC" id="2.4.1.69"/>
    </reaction>
</comment>
<comment type="similarity">
    <text evidence="4">Belongs to the glycosyltransferase 2 family.</text>
</comment>
<protein>
    <recommendedName>
        <fullName>Bifunctional glycosyltransferase pgtA</fullName>
    </recommendedName>
    <alternativeName>
        <fullName>FT85</fullName>
    </alternativeName>
    <domain>
        <recommendedName>
            <fullName>N-acetylglucosamine 3-beta-galactosyltransferase</fullName>
            <ecNumber evidence="2 3">2.4.1.-</ecNumber>
        </recommendedName>
    </domain>
    <domain>
        <recommendedName>
            <fullName>Alpha-1,2-fucosyltransferase</fullName>
            <ecNumber evidence="2">2.4.1.69</ecNumber>
        </recommendedName>
    </domain>
</protein>
<evidence type="ECO:0000256" key="1">
    <source>
        <dbReference type="SAM" id="MobiDB-lite"/>
    </source>
</evidence>
<evidence type="ECO:0000269" key="2">
    <source>
    </source>
</evidence>
<evidence type="ECO:0000269" key="3">
    <source>
    </source>
</evidence>
<evidence type="ECO:0000305" key="4"/>
<organism>
    <name type="scientific">Dictyostelium discoideum</name>
    <name type="common">Social amoeba</name>
    <dbReference type="NCBI Taxonomy" id="44689"/>
    <lineage>
        <taxon>Eukaryota</taxon>
        <taxon>Amoebozoa</taxon>
        <taxon>Evosea</taxon>
        <taxon>Eumycetozoa</taxon>
        <taxon>Dictyostelia</taxon>
        <taxon>Dictyosteliales</taxon>
        <taxon>Dictyosteliaceae</taxon>
        <taxon>Dictyostelium</taxon>
    </lineage>
</organism>
<dbReference type="EC" id="2.4.1.-" evidence="2 3"/>
<dbReference type="EC" id="2.4.1.69" evidence="2"/>
<dbReference type="EMBL" id="AF279134">
    <property type="protein sequence ID" value="AAF82378.1"/>
    <property type="molecule type" value="Genomic_DNA"/>
</dbReference>
<dbReference type="EMBL" id="AAFI02000057">
    <property type="protein sequence ID" value="EAL65495.1"/>
    <property type="molecule type" value="Genomic_DNA"/>
</dbReference>
<dbReference type="RefSeq" id="XP_638911.1">
    <property type="nucleotide sequence ID" value="XM_633819.1"/>
</dbReference>
<dbReference type="SMR" id="Q54QG0"/>
<dbReference type="FunCoup" id="Q54QG0">
    <property type="interactions" value="614"/>
</dbReference>
<dbReference type="STRING" id="44689.Q54QG0"/>
<dbReference type="CAZy" id="GT2">
    <property type="family name" value="Glycosyltransferase Family 2"/>
</dbReference>
<dbReference type="CAZy" id="GT74">
    <property type="family name" value="Glycosyltransferase Family 74"/>
</dbReference>
<dbReference type="PaxDb" id="44689-DDB0191458"/>
<dbReference type="EnsemblProtists" id="EAL65495">
    <property type="protein sequence ID" value="EAL65495"/>
    <property type="gene ID" value="DDB_G0283761"/>
</dbReference>
<dbReference type="GeneID" id="8624308"/>
<dbReference type="KEGG" id="ddi:DDB_G0283761"/>
<dbReference type="dictyBase" id="DDB_G0283761">
    <property type="gene designation" value="pgtA"/>
</dbReference>
<dbReference type="VEuPathDB" id="AmoebaDB:DDB_G0283761"/>
<dbReference type="eggNOG" id="ENOG502S9FF">
    <property type="taxonomic scope" value="Eukaryota"/>
</dbReference>
<dbReference type="HOGENOM" id="CLU_363472_0_0_1"/>
<dbReference type="InParanoid" id="Q54QG0"/>
<dbReference type="OMA" id="WSMFFNC"/>
<dbReference type="PRO" id="PR:Q54QG0"/>
<dbReference type="Proteomes" id="UP000002195">
    <property type="component" value="Chromosome 4"/>
</dbReference>
<dbReference type="GO" id="GO:0005737">
    <property type="term" value="C:cytoplasm"/>
    <property type="evidence" value="ECO:0000314"/>
    <property type="project" value="dictyBase"/>
</dbReference>
<dbReference type="GO" id="GO:0031127">
    <property type="term" value="F:alpha-(1,2)-fucosyltransferase activity"/>
    <property type="evidence" value="ECO:0000315"/>
    <property type="project" value="dictyBase"/>
</dbReference>
<dbReference type="GO" id="GO:0008417">
    <property type="term" value="F:fucosyltransferase activity"/>
    <property type="evidence" value="ECO:0000314"/>
    <property type="project" value="dictyBase"/>
</dbReference>
<dbReference type="GO" id="GO:0008107">
    <property type="term" value="F:galactoside 2-alpha-L-fucosyltransferase activity"/>
    <property type="evidence" value="ECO:0007669"/>
    <property type="project" value="UniProtKB-EC"/>
</dbReference>
<dbReference type="GO" id="GO:0016263">
    <property type="term" value="F:glycoprotein-N-acetylgalactosamine 3-beta-galactosyltransferase activity"/>
    <property type="evidence" value="ECO:0000314"/>
    <property type="project" value="dictyBase"/>
</dbReference>
<dbReference type="GO" id="GO:0008499">
    <property type="term" value="F:N-acetyl-beta-D-glucosaminide beta-(1,3)-galactosyltransferase activity"/>
    <property type="evidence" value="ECO:0007669"/>
    <property type="project" value="RHEA"/>
</dbReference>
<dbReference type="GO" id="GO:0010265">
    <property type="term" value="P:SCF complex assembly"/>
    <property type="evidence" value="ECO:0000314"/>
    <property type="project" value="dictyBase"/>
</dbReference>
<dbReference type="FunFam" id="3.90.550.10:FF:000430">
    <property type="entry name" value="Bifunctional glycosyltransferase pgtA"/>
    <property type="match status" value="1"/>
</dbReference>
<dbReference type="Gene3D" id="3.90.550.10">
    <property type="entry name" value="Spore Coat Polysaccharide Biosynthesis Protein SpsA, Chain A"/>
    <property type="match status" value="1"/>
</dbReference>
<dbReference type="InterPro" id="IPR001173">
    <property type="entry name" value="Glyco_trans_2-like"/>
</dbReference>
<dbReference type="InterPro" id="IPR050834">
    <property type="entry name" value="Glycosyltransf_2"/>
</dbReference>
<dbReference type="InterPro" id="IPR029044">
    <property type="entry name" value="Nucleotide-diphossugar_trans"/>
</dbReference>
<dbReference type="PANTHER" id="PTHR43685">
    <property type="entry name" value="GLYCOSYLTRANSFERASE"/>
    <property type="match status" value="1"/>
</dbReference>
<dbReference type="PANTHER" id="PTHR43685:SF5">
    <property type="entry name" value="GLYCOSYLTRANSFERASE EPSE-RELATED"/>
    <property type="match status" value="1"/>
</dbReference>
<dbReference type="Pfam" id="PF00535">
    <property type="entry name" value="Glycos_transf_2"/>
    <property type="match status" value="1"/>
</dbReference>
<dbReference type="SUPFAM" id="SSF53448">
    <property type="entry name" value="Nucleotide-diphospho-sugar transferases"/>
    <property type="match status" value="1"/>
</dbReference>
<feature type="chain" id="PRO_0000328252" description="Bifunctional glycosyltransferase pgtA">
    <location>
        <begin position="1"/>
        <end position="769"/>
    </location>
</feature>
<feature type="region of interest" description="N-acetylgalactosamine 3-beta-galactosyltransferase">
    <location>
        <begin position="25"/>
        <end position="210"/>
    </location>
</feature>
<feature type="region of interest" description="Disordered" evidence="1">
    <location>
        <begin position="410"/>
        <end position="442"/>
    </location>
</feature>
<feature type="region of interest" description="Alpha-1,2-fucosyltransferase">
    <location>
        <begin position="442"/>
        <end position="769"/>
    </location>
</feature>
<feature type="compositionally biased region" description="Low complexity" evidence="1">
    <location>
        <begin position="410"/>
        <end position="441"/>
    </location>
</feature>
<feature type="site" description="Important for Gal-transferase activity">
    <location>
        <position position="53"/>
    </location>
</feature>
<feature type="site" description="Important for Gal-transferase activity">
    <location>
        <position position="226"/>
    </location>
</feature>
<feature type="site" description="Important for Gal- and Fuc-transferase activities">
    <location>
        <position position="509"/>
    </location>
</feature>
<feature type="site" description="Important for Fuc-transferase activity">
    <location>
        <position position="654"/>
    </location>
</feature>
<feature type="mutagenesis site" description="Loss of Gal-transferase activity." evidence="3">
    <original>D</original>
    <variation>N</variation>
    <location>
        <position position="53"/>
    </location>
</feature>
<feature type="mutagenesis site" description="Loss of Gal-transferase activity." evidence="3">
    <original>D</original>
    <variation>N</variation>
    <location>
        <position position="226"/>
    </location>
</feature>
<feature type="mutagenesis site" description="Slight decrease in Gal-transferase activity." evidence="3">
    <original>D</original>
    <variation>N</variation>
    <location>
        <position position="497"/>
    </location>
</feature>
<feature type="mutagenesis site" description="39-60% decrease in both Gal- and Fuc-transferase activities." evidence="3">
    <original>D</original>
    <variation>N</variation>
    <location>
        <position position="509"/>
    </location>
</feature>
<feature type="mutagenesis site" description="Loss of Fuc-transferase activity and 80% decrease in Gal-transferase activity." evidence="3">
    <original>D</original>
    <variation>N</variation>
    <location>
        <position position="654"/>
    </location>
</feature>
<feature type="sequence conflict" description="In Ref. 1; AAF82378." evidence="4" ref="1">
    <location>
        <position position="413"/>
    </location>
</feature>
<proteinExistence type="evidence at protein level"/>
<keyword id="KW-0903">Direct protein sequencing</keyword>
<keyword id="KW-0328">Glycosyltransferase</keyword>
<keyword id="KW-1185">Reference proteome</keyword>
<keyword id="KW-0808">Transferase</keyword>
<gene>
    <name type="primary">pgtA</name>
    <name type="synonym">fucB</name>
    <name type="ORF">DDB_G0283761</name>
</gene>